<name>TGT_BLOFL</name>
<comment type="function">
    <text evidence="1">Catalyzes the base-exchange of a guanine (G) residue with the queuine precursor 7-aminomethyl-7-deazaguanine (PreQ1) at position 34 (anticodon wobble position) in tRNAs with GU(N) anticodons (tRNA-Asp, -Asn, -His and -Tyr). Catalysis occurs through a double-displacement mechanism. The nucleophile active site attacks the C1' of nucleotide 34 to detach the guanine base from the RNA, forming a covalent enzyme-RNA intermediate. The proton acceptor active site deprotonates the incoming PreQ1, allowing a nucleophilic attack on the C1' of the ribose to form the product. After dissociation, two additional enzymatic reactions on the tRNA convert PreQ1 to queuine (Q), resulting in the hypermodified nucleoside queuosine (7-(((4,5-cis-dihydroxy-2-cyclopenten-1-yl)amino)methyl)-7-deazaguanosine).</text>
</comment>
<comment type="catalytic activity">
    <reaction evidence="1">
        <text>7-aminomethyl-7-carbaguanine + guanosine(34) in tRNA = 7-aminomethyl-7-carbaguanosine(34) in tRNA + guanine</text>
        <dbReference type="Rhea" id="RHEA:24104"/>
        <dbReference type="Rhea" id="RHEA-COMP:10341"/>
        <dbReference type="Rhea" id="RHEA-COMP:10342"/>
        <dbReference type="ChEBI" id="CHEBI:16235"/>
        <dbReference type="ChEBI" id="CHEBI:58703"/>
        <dbReference type="ChEBI" id="CHEBI:74269"/>
        <dbReference type="ChEBI" id="CHEBI:82833"/>
        <dbReference type="EC" id="2.4.2.29"/>
    </reaction>
</comment>
<comment type="cofactor">
    <cofactor evidence="1">
        <name>Zn(2+)</name>
        <dbReference type="ChEBI" id="CHEBI:29105"/>
    </cofactor>
    <text evidence="1">Binds 1 zinc ion per subunit.</text>
</comment>
<comment type="pathway">
    <text evidence="1">tRNA modification; tRNA-queuosine biosynthesis.</text>
</comment>
<comment type="subunit">
    <text evidence="1">Homodimer. Within each dimer, one monomer is responsible for RNA recognition and catalysis, while the other monomer binds to the replacement base PreQ1.</text>
</comment>
<comment type="similarity">
    <text evidence="1">Belongs to the queuine tRNA-ribosyltransferase family.</text>
</comment>
<sequence>MVFRVLQTDGDARVGKLTCHHGIIETPAFIPVGTYGVVKSVTSQEVAESGAQIILSNTFHLWLRPGLEIIKIHQNLHKFMNWMGPIITDSGGFQVFSLNKLRKITESGVYFKDPVNGSTIFLTPEKSMDIQYHLGSDIVLVFDECVSYPSTWEYIKNSVEISLNWAERSRLHFDKLHNSNMLFAIIQGGMYEELRNRSAQELINIKFDGYAIGGLSVGETPQERFRIVSYVCKIIPFDKPRYLMGVGKPQDLIEAVCLGVDMFDCVIPTRNARNGYLFTNNGVVRIRNAKYESDLDPIEEDCDCYTCQRYYSRSYLHYLDRCNESLGIRLNTIHNLRYYQRLMEEIRQSIRMKKLRKFVEAFNYKFNSVSTNNYLSNI</sequence>
<evidence type="ECO:0000255" key="1">
    <source>
        <dbReference type="HAMAP-Rule" id="MF_00168"/>
    </source>
</evidence>
<gene>
    <name evidence="1" type="primary">tgt</name>
    <name type="ordered locus">Bfl230</name>
</gene>
<proteinExistence type="inferred from homology"/>
<organism>
    <name type="scientific">Blochmanniella floridana</name>
    <dbReference type="NCBI Taxonomy" id="203907"/>
    <lineage>
        <taxon>Bacteria</taxon>
        <taxon>Pseudomonadati</taxon>
        <taxon>Pseudomonadota</taxon>
        <taxon>Gammaproteobacteria</taxon>
        <taxon>Enterobacterales</taxon>
        <taxon>Enterobacteriaceae</taxon>
        <taxon>ant endosymbionts</taxon>
        <taxon>Candidatus Blochmanniella</taxon>
    </lineage>
</organism>
<protein>
    <recommendedName>
        <fullName evidence="1">Queuine tRNA-ribosyltransferase</fullName>
        <ecNumber evidence="1">2.4.2.29</ecNumber>
    </recommendedName>
    <alternativeName>
        <fullName evidence="1">Guanine insertion enzyme</fullName>
    </alternativeName>
    <alternativeName>
        <fullName evidence="1">tRNA-guanine transglycosylase</fullName>
    </alternativeName>
</protein>
<accession>Q7VQB1</accession>
<reference key="1">
    <citation type="journal article" date="2003" name="Proc. Natl. Acad. Sci. U.S.A.">
        <title>The genome sequence of Blochmannia floridanus: comparative analysis of reduced genomes.</title>
        <authorList>
            <person name="Gil R."/>
            <person name="Silva F.J."/>
            <person name="Zientz E."/>
            <person name="Delmotte F."/>
            <person name="Gonzalez-Candelas F."/>
            <person name="Latorre A."/>
            <person name="Rausell C."/>
            <person name="Kamerbeek J."/>
            <person name="Gadau J."/>
            <person name="Hoelldobler B."/>
            <person name="van Ham R.C.H.J."/>
            <person name="Gross R."/>
            <person name="Moya A."/>
        </authorList>
    </citation>
    <scope>NUCLEOTIDE SEQUENCE [LARGE SCALE GENOMIC DNA]</scope>
</reference>
<keyword id="KW-0328">Glycosyltransferase</keyword>
<keyword id="KW-0479">Metal-binding</keyword>
<keyword id="KW-0671">Queuosine biosynthesis</keyword>
<keyword id="KW-1185">Reference proteome</keyword>
<keyword id="KW-0808">Transferase</keyword>
<keyword id="KW-0819">tRNA processing</keyword>
<keyword id="KW-0862">Zinc</keyword>
<dbReference type="EC" id="2.4.2.29" evidence="1"/>
<dbReference type="EMBL" id="BX248583">
    <property type="protein sequence ID" value="CAD83743.1"/>
    <property type="molecule type" value="Genomic_DNA"/>
</dbReference>
<dbReference type="SMR" id="Q7VQB1"/>
<dbReference type="STRING" id="203907.Bfl230"/>
<dbReference type="KEGG" id="bfl:Bfl230"/>
<dbReference type="eggNOG" id="COG0343">
    <property type="taxonomic scope" value="Bacteria"/>
</dbReference>
<dbReference type="HOGENOM" id="CLU_022060_0_1_6"/>
<dbReference type="OrthoDB" id="9805417at2"/>
<dbReference type="UniPathway" id="UPA00392"/>
<dbReference type="Proteomes" id="UP000002192">
    <property type="component" value="Chromosome"/>
</dbReference>
<dbReference type="GO" id="GO:0005829">
    <property type="term" value="C:cytosol"/>
    <property type="evidence" value="ECO:0007669"/>
    <property type="project" value="TreeGrafter"/>
</dbReference>
<dbReference type="GO" id="GO:0046872">
    <property type="term" value="F:metal ion binding"/>
    <property type="evidence" value="ECO:0007669"/>
    <property type="project" value="UniProtKB-KW"/>
</dbReference>
<dbReference type="GO" id="GO:0008479">
    <property type="term" value="F:tRNA-guanosine(34) queuine transglycosylase activity"/>
    <property type="evidence" value="ECO:0007669"/>
    <property type="project" value="UniProtKB-UniRule"/>
</dbReference>
<dbReference type="GO" id="GO:0008616">
    <property type="term" value="P:queuosine biosynthetic process"/>
    <property type="evidence" value="ECO:0007669"/>
    <property type="project" value="UniProtKB-UniRule"/>
</dbReference>
<dbReference type="GO" id="GO:0002099">
    <property type="term" value="P:tRNA wobble guanine modification"/>
    <property type="evidence" value="ECO:0007669"/>
    <property type="project" value="TreeGrafter"/>
</dbReference>
<dbReference type="GO" id="GO:0101030">
    <property type="term" value="P:tRNA-guanine transglycosylation"/>
    <property type="evidence" value="ECO:0007669"/>
    <property type="project" value="InterPro"/>
</dbReference>
<dbReference type="FunFam" id="3.20.20.105:FF:000001">
    <property type="entry name" value="Queuine tRNA-ribosyltransferase"/>
    <property type="match status" value="1"/>
</dbReference>
<dbReference type="Gene3D" id="3.20.20.105">
    <property type="entry name" value="Queuine tRNA-ribosyltransferase-like"/>
    <property type="match status" value="1"/>
</dbReference>
<dbReference type="HAMAP" id="MF_00168">
    <property type="entry name" value="Q_tRNA_Tgt"/>
    <property type="match status" value="1"/>
</dbReference>
<dbReference type="InterPro" id="IPR050076">
    <property type="entry name" value="ArchSynthase1/Queuine_TRR"/>
</dbReference>
<dbReference type="InterPro" id="IPR004803">
    <property type="entry name" value="TGT"/>
</dbReference>
<dbReference type="InterPro" id="IPR036511">
    <property type="entry name" value="TGT-like_sf"/>
</dbReference>
<dbReference type="InterPro" id="IPR002616">
    <property type="entry name" value="tRNA_ribo_trans-like"/>
</dbReference>
<dbReference type="NCBIfam" id="TIGR00430">
    <property type="entry name" value="Q_tRNA_tgt"/>
    <property type="match status" value="1"/>
</dbReference>
<dbReference type="NCBIfam" id="TIGR00449">
    <property type="entry name" value="tgt_general"/>
    <property type="match status" value="1"/>
</dbReference>
<dbReference type="PANTHER" id="PTHR46499">
    <property type="entry name" value="QUEUINE TRNA-RIBOSYLTRANSFERASE"/>
    <property type="match status" value="1"/>
</dbReference>
<dbReference type="PANTHER" id="PTHR46499:SF1">
    <property type="entry name" value="QUEUINE TRNA-RIBOSYLTRANSFERASE"/>
    <property type="match status" value="1"/>
</dbReference>
<dbReference type="Pfam" id="PF01702">
    <property type="entry name" value="TGT"/>
    <property type="match status" value="1"/>
</dbReference>
<dbReference type="SUPFAM" id="SSF51713">
    <property type="entry name" value="tRNA-guanine transglycosylase"/>
    <property type="match status" value="1"/>
</dbReference>
<feature type="chain" id="PRO_0000135461" description="Queuine tRNA-ribosyltransferase">
    <location>
        <begin position="1"/>
        <end position="378"/>
    </location>
</feature>
<feature type="region of interest" description="RNA binding" evidence="1">
    <location>
        <begin position="245"/>
        <end position="251"/>
    </location>
</feature>
<feature type="region of interest" description="RNA binding; important for wobble base 34 recognition" evidence="1">
    <location>
        <begin position="269"/>
        <end position="273"/>
    </location>
</feature>
<feature type="active site" description="Proton acceptor" evidence="1">
    <location>
        <position position="89"/>
    </location>
</feature>
<feature type="active site" description="Nucleophile" evidence="1">
    <location>
        <position position="264"/>
    </location>
</feature>
<feature type="binding site" evidence="1">
    <location>
        <begin position="89"/>
        <end position="93"/>
    </location>
    <ligand>
        <name>substrate</name>
    </ligand>
</feature>
<feature type="binding site" evidence="1">
    <location>
        <position position="143"/>
    </location>
    <ligand>
        <name>substrate</name>
    </ligand>
</feature>
<feature type="binding site" evidence="1">
    <location>
        <position position="187"/>
    </location>
    <ligand>
        <name>substrate</name>
    </ligand>
</feature>
<feature type="binding site" evidence="1">
    <location>
        <position position="214"/>
    </location>
    <ligand>
        <name>substrate</name>
    </ligand>
</feature>
<feature type="binding site" evidence="1">
    <location>
        <position position="302"/>
    </location>
    <ligand>
        <name>Zn(2+)</name>
        <dbReference type="ChEBI" id="CHEBI:29105"/>
    </ligand>
</feature>
<feature type="binding site" evidence="1">
    <location>
        <position position="304"/>
    </location>
    <ligand>
        <name>Zn(2+)</name>
        <dbReference type="ChEBI" id="CHEBI:29105"/>
    </ligand>
</feature>
<feature type="binding site" evidence="1">
    <location>
        <position position="307"/>
    </location>
    <ligand>
        <name>Zn(2+)</name>
        <dbReference type="ChEBI" id="CHEBI:29105"/>
    </ligand>
</feature>
<feature type="binding site" evidence="1">
    <location>
        <position position="334"/>
    </location>
    <ligand>
        <name>Zn(2+)</name>
        <dbReference type="ChEBI" id="CHEBI:29105"/>
    </ligand>
</feature>